<gene>
    <name evidence="1" type="primary">rsmG</name>
    <name type="ordered locus">Neut_2436</name>
</gene>
<feature type="chain" id="PRO_1000010173" description="Ribosomal RNA small subunit methyltransferase G">
    <location>
        <begin position="1"/>
        <end position="214"/>
    </location>
</feature>
<feature type="binding site" evidence="1">
    <location>
        <position position="77"/>
    </location>
    <ligand>
        <name>S-adenosyl-L-methionine</name>
        <dbReference type="ChEBI" id="CHEBI:59789"/>
    </ligand>
</feature>
<feature type="binding site" evidence="1">
    <location>
        <position position="82"/>
    </location>
    <ligand>
        <name>S-adenosyl-L-methionine</name>
        <dbReference type="ChEBI" id="CHEBI:59789"/>
    </ligand>
</feature>
<feature type="binding site" evidence="1">
    <location>
        <begin position="128"/>
        <end position="129"/>
    </location>
    <ligand>
        <name>S-adenosyl-L-methionine</name>
        <dbReference type="ChEBI" id="CHEBI:59789"/>
    </ligand>
</feature>
<feature type="binding site" evidence="1">
    <location>
        <position position="143"/>
    </location>
    <ligand>
        <name>S-adenosyl-L-methionine</name>
        <dbReference type="ChEBI" id="CHEBI:59789"/>
    </ligand>
</feature>
<sequence>MNLEKQLHEGLEAISGLSADVAHLSSRLLRYIELITKWNSTHNLTSVRNPESMITRHMLDSLVVLPHISGPNIVDVGSGAGLPGIPIALARPEWQVVMVESNQKKAVFMQQVVVELRLQNVSIRQERVEKIKPGNKVDTVISRAFSSLERFMRLSKHLCENNVDHCRFIAMKGAFPDMELMQLPPEFSVEQIIPVAVPGLRAKRHLVVMRCHSE</sequence>
<protein>
    <recommendedName>
        <fullName evidence="1">Ribosomal RNA small subunit methyltransferase G</fullName>
        <ecNumber evidence="1">2.1.1.170</ecNumber>
    </recommendedName>
    <alternativeName>
        <fullName evidence="1">16S rRNA 7-methylguanosine methyltransferase</fullName>
        <shortName evidence="1">16S rRNA m7G methyltransferase</shortName>
    </alternativeName>
</protein>
<name>RSMG_NITEC</name>
<keyword id="KW-0963">Cytoplasm</keyword>
<keyword id="KW-0489">Methyltransferase</keyword>
<keyword id="KW-0698">rRNA processing</keyword>
<keyword id="KW-0949">S-adenosyl-L-methionine</keyword>
<keyword id="KW-0808">Transferase</keyword>
<comment type="function">
    <text evidence="1">Specifically methylates the N7 position of guanine in position 527 of 16S rRNA.</text>
</comment>
<comment type="catalytic activity">
    <reaction evidence="1">
        <text>guanosine(527) in 16S rRNA + S-adenosyl-L-methionine = N(7)-methylguanosine(527) in 16S rRNA + S-adenosyl-L-homocysteine</text>
        <dbReference type="Rhea" id="RHEA:42732"/>
        <dbReference type="Rhea" id="RHEA-COMP:10209"/>
        <dbReference type="Rhea" id="RHEA-COMP:10210"/>
        <dbReference type="ChEBI" id="CHEBI:57856"/>
        <dbReference type="ChEBI" id="CHEBI:59789"/>
        <dbReference type="ChEBI" id="CHEBI:74269"/>
        <dbReference type="ChEBI" id="CHEBI:74480"/>
        <dbReference type="EC" id="2.1.1.170"/>
    </reaction>
</comment>
<comment type="subcellular location">
    <subcellularLocation>
        <location evidence="1">Cytoplasm</location>
    </subcellularLocation>
</comment>
<comment type="similarity">
    <text evidence="1">Belongs to the methyltransferase superfamily. RNA methyltransferase RsmG family.</text>
</comment>
<accession>Q0ADD7</accession>
<organism>
    <name type="scientific">Nitrosomonas eutropha (strain DSM 101675 / C91 / Nm57)</name>
    <dbReference type="NCBI Taxonomy" id="335283"/>
    <lineage>
        <taxon>Bacteria</taxon>
        <taxon>Pseudomonadati</taxon>
        <taxon>Pseudomonadota</taxon>
        <taxon>Betaproteobacteria</taxon>
        <taxon>Nitrosomonadales</taxon>
        <taxon>Nitrosomonadaceae</taxon>
        <taxon>Nitrosomonas</taxon>
    </lineage>
</organism>
<reference key="1">
    <citation type="journal article" date="2007" name="Environ. Microbiol.">
        <title>Whole-genome analysis of the ammonia-oxidizing bacterium, Nitrosomonas eutropha C91: implications for niche adaptation.</title>
        <authorList>
            <person name="Stein L.Y."/>
            <person name="Arp D.J."/>
            <person name="Berube P.M."/>
            <person name="Chain P.S."/>
            <person name="Hauser L."/>
            <person name="Jetten M.S."/>
            <person name="Klotz M.G."/>
            <person name="Larimer F.W."/>
            <person name="Norton J.M."/>
            <person name="Op den Camp H.J.M."/>
            <person name="Shin M."/>
            <person name="Wei X."/>
        </authorList>
    </citation>
    <scope>NUCLEOTIDE SEQUENCE [LARGE SCALE GENOMIC DNA]</scope>
    <source>
        <strain>DSM 101675 / C91 / Nm57</strain>
    </source>
</reference>
<evidence type="ECO:0000255" key="1">
    <source>
        <dbReference type="HAMAP-Rule" id="MF_00074"/>
    </source>
</evidence>
<dbReference type="EC" id="2.1.1.170" evidence="1"/>
<dbReference type="EMBL" id="CP000450">
    <property type="protein sequence ID" value="ABI60645.1"/>
    <property type="molecule type" value="Genomic_DNA"/>
</dbReference>
<dbReference type="RefSeq" id="WP_011635410.1">
    <property type="nucleotide sequence ID" value="NC_008344.1"/>
</dbReference>
<dbReference type="SMR" id="Q0ADD7"/>
<dbReference type="STRING" id="335283.Neut_2436"/>
<dbReference type="KEGG" id="net:Neut_2436"/>
<dbReference type="eggNOG" id="COG0357">
    <property type="taxonomic scope" value="Bacteria"/>
</dbReference>
<dbReference type="HOGENOM" id="CLU_065341_2_0_4"/>
<dbReference type="OrthoDB" id="9808773at2"/>
<dbReference type="Proteomes" id="UP000001966">
    <property type="component" value="Chromosome"/>
</dbReference>
<dbReference type="GO" id="GO:0005829">
    <property type="term" value="C:cytosol"/>
    <property type="evidence" value="ECO:0007669"/>
    <property type="project" value="TreeGrafter"/>
</dbReference>
<dbReference type="GO" id="GO:0070043">
    <property type="term" value="F:rRNA (guanine-N7-)-methyltransferase activity"/>
    <property type="evidence" value="ECO:0007669"/>
    <property type="project" value="UniProtKB-UniRule"/>
</dbReference>
<dbReference type="CDD" id="cd02440">
    <property type="entry name" value="AdoMet_MTases"/>
    <property type="match status" value="1"/>
</dbReference>
<dbReference type="Gene3D" id="3.40.50.150">
    <property type="entry name" value="Vaccinia Virus protein VP39"/>
    <property type="match status" value="1"/>
</dbReference>
<dbReference type="HAMAP" id="MF_00074">
    <property type="entry name" value="16SrRNA_methyltr_G"/>
    <property type="match status" value="1"/>
</dbReference>
<dbReference type="InterPro" id="IPR003682">
    <property type="entry name" value="rRNA_ssu_MeTfrase_G"/>
</dbReference>
<dbReference type="InterPro" id="IPR029063">
    <property type="entry name" value="SAM-dependent_MTases_sf"/>
</dbReference>
<dbReference type="NCBIfam" id="TIGR00138">
    <property type="entry name" value="rsmG_gidB"/>
    <property type="match status" value="1"/>
</dbReference>
<dbReference type="PANTHER" id="PTHR31760">
    <property type="entry name" value="S-ADENOSYL-L-METHIONINE-DEPENDENT METHYLTRANSFERASES SUPERFAMILY PROTEIN"/>
    <property type="match status" value="1"/>
</dbReference>
<dbReference type="PANTHER" id="PTHR31760:SF0">
    <property type="entry name" value="S-ADENOSYL-L-METHIONINE-DEPENDENT METHYLTRANSFERASES SUPERFAMILY PROTEIN"/>
    <property type="match status" value="1"/>
</dbReference>
<dbReference type="Pfam" id="PF02527">
    <property type="entry name" value="GidB"/>
    <property type="match status" value="1"/>
</dbReference>
<dbReference type="PIRSF" id="PIRSF003078">
    <property type="entry name" value="GidB"/>
    <property type="match status" value="1"/>
</dbReference>
<dbReference type="SUPFAM" id="SSF53335">
    <property type="entry name" value="S-adenosyl-L-methionine-dependent methyltransferases"/>
    <property type="match status" value="1"/>
</dbReference>
<proteinExistence type="inferred from homology"/>